<organism evidence="8">
    <name type="scientific">Staphylococcus aureus (strain USA300)</name>
    <dbReference type="NCBI Taxonomy" id="367830"/>
    <lineage>
        <taxon>Bacteria</taxon>
        <taxon>Bacillati</taxon>
        <taxon>Bacillota</taxon>
        <taxon>Bacilli</taxon>
        <taxon>Bacillales</taxon>
        <taxon>Staphylococcaceae</taxon>
        <taxon>Staphylococcus</taxon>
    </lineage>
</organism>
<protein>
    <recommendedName>
        <fullName evidence="5">Probable ergothioneine transporter EgtUBC</fullName>
    </recommendedName>
</protein>
<proteinExistence type="inferred from homology"/>
<keyword id="KW-0378">Hydrolase</keyword>
<keyword id="KW-0406">Ion transport</keyword>
<keyword id="KW-0472">Membrane</keyword>
<keyword id="KW-0533">Nickel</keyword>
<keyword id="KW-0921">Nickel transport</keyword>
<keyword id="KW-0812">Transmembrane</keyword>
<keyword id="KW-1133">Transmembrane helix</keyword>
<keyword id="KW-0813">Transport</keyword>
<evidence type="ECO:0000250" key="1">
    <source>
        <dbReference type="UniProtKB" id="A0A0H2ZQB9"/>
    </source>
</evidence>
<evidence type="ECO:0000255" key="2"/>
<evidence type="ECO:0000255" key="3">
    <source>
        <dbReference type="PROSITE-ProRule" id="PRU00441"/>
    </source>
</evidence>
<evidence type="ECO:0000269" key="4">
    <source>
    </source>
</evidence>
<evidence type="ECO:0000303" key="5">
    <source>
    </source>
</evidence>
<evidence type="ECO:0000305" key="6"/>
<evidence type="ECO:0000312" key="7">
    <source>
        <dbReference type="EMBL" id="ABD22712.1"/>
    </source>
</evidence>
<evidence type="ECO:0000312" key="8">
    <source>
        <dbReference type="Proteomes" id="UP000001939"/>
    </source>
</evidence>
<name>EGTUB_STAA3</name>
<reference evidence="8" key="1">
    <citation type="journal article" date="2006" name="Lancet">
        <title>Complete genome sequence of USA300, an epidemic clone of community-acquired meticillin-resistant Staphylococcus aureus.</title>
        <authorList>
            <person name="Diep B.A."/>
            <person name="Gill S.R."/>
            <person name="Chang R.F."/>
            <person name="Phan T.H."/>
            <person name="Chen J.H."/>
            <person name="Davidson M.G."/>
            <person name="Lin F."/>
            <person name="Lin J."/>
            <person name="Carleton H.A."/>
            <person name="Mongodin E.F."/>
            <person name="Sensabaugh G.F."/>
            <person name="Perdreau-Remington F."/>
        </authorList>
    </citation>
    <scope>NUCLEOTIDE SEQUENCE [LARGE SCALE GENOMIC DNA]</scope>
    <source>
        <strain evidence="8">USA300</strain>
    </source>
</reference>
<reference evidence="6" key="2">
    <citation type="journal article" date="2022" name="Nat. Commun.">
        <title>Discovery and structure of a widespread bacterial ABC transporter specific for ergothioneine.</title>
        <authorList>
            <person name="Zhang Y."/>
            <person name="Gonzalez-Gutierrez G."/>
            <person name="Legg K.A."/>
            <person name="Walsh B.J.C."/>
            <person name="Pis Diez C.M."/>
            <person name="Edmonds K.A."/>
            <person name="Giedroc D.P."/>
        </authorList>
    </citation>
    <scope>FUNCTION</scope>
    <scope>DOMAIN</scope>
</reference>
<accession>A0A0H2XK79</accession>
<gene>
    <name type="primary">egtUBC</name>
    <name evidence="7" type="ordered locus">SAUSA300_0707</name>
</gene>
<feature type="chain" id="PRO_0000458772" description="Probable ergothioneine transporter EgtUBC">
    <location>
        <begin position="1"/>
        <end position="504"/>
    </location>
</feature>
<feature type="transmembrane region" description="Helical" evidence="3">
    <location>
        <begin position="25"/>
        <end position="45"/>
    </location>
</feature>
<feature type="transmembrane region" description="Helical" evidence="3">
    <location>
        <begin position="49"/>
        <end position="69"/>
    </location>
</feature>
<feature type="transmembrane region" description="Helical" evidence="3">
    <location>
        <begin position="70"/>
        <end position="90"/>
    </location>
</feature>
<feature type="transmembrane region" description="Helical" evidence="3">
    <location>
        <begin position="145"/>
        <end position="165"/>
    </location>
</feature>
<feature type="transmembrane region" description="Helical" evidence="3">
    <location>
        <begin position="178"/>
        <end position="198"/>
    </location>
</feature>
<feature type="transmembrane region" description="Helical" evidence="2">
    <location>
        <begin position="209"/>
        <end position="229"/>
    </location>
</feature>
<feature type="domain" description="ABC transmembrane type-1" evidence="3">
    <location>
        <begin position="19"/>
        <end position="198"/>
    </location>
</feature>
<feature type="region of interest" description="Ergothioneine binding domain" evidence="5">
    <location>
        <begin position="231"/>
        <end position="504"/>
    </location>
</feature>
<comment type="function">
    <text evidence="1 4">Part of an ABC transporter complex EgtU required for the uptake of ergothioneine (EGT), a natural low-molecular weight (LMW) thiol antioxidant (By similarity). Responsible for the translocation of the substrate across the membrane (By similarity). Also contains a C-terminal periplasmic solute-binding domain (SBD) which binds to EGT with sub-micromolar affinity (PubMed:36481738). Probably does not bind L-hercynine (PubMed:36481738).</text>
</comment>
<comment type="subunit">
    <text evidence="1">The complex is probably composed of at least an ATP-binding protein (EgtUA) and a transmembrane protein (EgtUBC).</text>
</comment>
<comment type="subcellular location">
    <subcellularLocation>
        <location evidence="2">Membrane</location>
        <topology evidence="2">Multi-pass membrane protein</topology>
    </subcellularLocation>
</comment>
<comment type="domain">
    <text evidence="1 4">The transmembrane domain (TMD) and the solute-binding domain (SBD) are fused (By similarity). SBD binds to ergothioneine (PubMed:36481738).</text>
</comment>
<comment type="similarity">
    <text evidence="6">In the N-terminal section; belongs to the binding-protein-dependent transport system permease family.</text>
</comment>
<comment type="similarity">
    <text evidence="6">In the C-terminal section; belongs to the OsmX family.</text>
</comment>
<dbReference type="EMBL" id="CP000255">
    <property type="protein sequence ID" value="ABD22712.1"/>
    <property type="molecule type" value="Genomic_DNA"/>
</dbReference>
<dbReference type="RefSeq" id="WP_000180991.1">
    <property type="nucleotide sequence ID" value="NZ_CP027476.1"/>
</dbReference>
<dbReference type="SMR" id="A0A0H2XK79"/>
<dbReference type="KEGG" id="saa:SAUSA300_0707"/>
<dbReference type="HOGENOM" id="CLU_038355_0_1_9"/>
<dbReference type="OMA" id="YKSFESH"/>
<dbReference type="Proteomes" id="UP000001939">
    <property type="component" value="Chromosome"/>
</dbReference>
<dbReference type="GO" id="GO:0043190">
    <property type="term" value="C:ATP-binding cassette (ABC) transporter complex"/>
    <property type="evidence" value="ECO:0007669"/>
    <property type="project" value="InterPro"/>
</dbReference>
<dbReference type="GO" id="GO:0016597">
    <property type="term" value="F:amino acid binding"/>
    <property type="evidence" value="ECO:0000314"/>
    <property type="project" value="UniProtKB"/>
</dbReference>
<dbReference type="GO" id="GO:0016787">
    <property type="term" value="F:hydrolase activity"/>
    <property type="evidence" value="ECO:0007669"/>
    <property type="project" value="UniProtKB-KW"/>
</dbReference>
<dbReference type="GO" id="GO:0022857">
    <property type="term" value="F:transmembrane transporter activity"/>
    <property type="evidence" value="ECO:0007669"/>
    <property type="project" value="InterPro"/>
</dbReference>
<dbReference type="GO" id="GO:0031460">
    <property type="term" value="P:glycine betaine transport"/>
    <property type="evidence" value="ECO:0007669"/>
    <property type="project" value="TreeGrafter"/>
</dbReference>
<dbReference type="GO" id="GO:0015675">
    <property type="term" value="P:nickel cation transport"/>
    <property type="evidence" value="ECO:0007669"/>
    <property type="project" value="UniProtKB-KW"/>
</dbReference>
<dbReference type="CDD" id="cd13610">
    <property type="entry name" value="PBP2_ChoS"/>
    <property type="match status" value="1"/>
</dbReference>
<dbReference type="CDD" id="cd06261">
    <property type="entry name" value="TM_PBP2"/>
    <property type="match status" value="1"/>
</dbReference>
<dbReference type="FunFam" id="1.10.3720.10:FF:000001">
    <property type="entry name" value="Glycine betaine ABC transporter, permease"/>
    <property type="match status" value="1"/>
</dbReference>
<dbReference type="FunFam" id="3.40.190.120:FF:000002">
    <property type="entry name" value="Osmoprotectant ABC transporter, permease protein"/>
    <property type="match status" value="1"/>
</dbReference>
<dbReference type="Gene3D" id="1.10.3720.10">
    <property type="entry name" value="MetI-like"/>
    <property type="match status" value="1"/>
</dbReference>
<dbReference type="Gene3D" id="3.40.190.120">
    <property type="entry name" value="Osmoprotection protein (prox), domain 2"/>
    <property type="match status" value="1"/>
</dbReference>
<dbReference type="Gene3D" id="3.40.190.10">
    <property type="entry name" value="Periplasmic binding protein-like II"/>
    <property type="match status" value="1"/>
</dbReference>
<dbReference type="InterPro" id="IPR007210">
    <property type="entry name" value="ABC_Gly_betaine_transp_sub-bd"/>
</dbReference>
<dbReference type="InterPro" id="IPR051204">
    <property type="entry name" value="ABC_transp_perm/SBD"/>
</dbReference>
<dbReference type="InterPro" id="IPR000515">
    <property type="entry name" value="MetI-like"/>
</dbReference>
<dbReference type="InterPro" id="IPR035906">
    <property type="entry name" value="MetI-like_sf"/>
</dbReference>
<dbReference type="PANTHER" id="PTHR30177">
    <property type="entry name" value="GLYCINE BETAINE/L-PROLINE TRANSPORT SYSTEM PERMEASE PROTEIN PROW"/>
    <property type="match status" value="1"/>
</dbReference>
<dbReference type="PANTHER" id="PTHR30177:SF4">
    <property type="entry name" value="OSMOPROTECTANT IMPORT PERMEASE PROTEIN OSMW"/>
    <property type="match status" value="1"/>
</dbReference>
<dbReference type="Pfam" id="PF00528">
    <property type="entry name" value="BPD_transp_1"/>
    <property type="match status" value="1"/>
</dbReference>
<dbReference type="Pfam" id="PF04069">
    <property type="entry name" value="OpuAC"/>
    <property type="match status" value="1"/>
</dbReference>
<dbReference type="SUPFAM" id="SSF161098">
    <property type="entry name" value="MetI-like"/>
    <property type="match status" value="1"/>
</dbReference>
<dbReference type="SUPFAM" id="SSF53850">
    <property type="entry name" value="Periplasmic binding protein-like II"/>
    <property type="match status" value="1"/>
</dbReference>
<dbReference type="PROSITE" id="PS50928">
    <property type="entry name" value="ABC_TM1"/>
    <property type="match status" value="1"/>
</dbReference>
<sequence length="504" mass="56058">MTNFFDILSERKGQLFSTMIEHIQISFIALLIATAIAVPLGILLTKTKTISEIVMNIAAILQTIPSLALLGLMIPLFGIGRVPAIIALVVYALLPILRNTYTGIKEVDPSLIEAAKGIGMKPFRRLTKVELPIAMPVIMAGVRTAMVLIIGTATLAALIGAGGLGDLILLGIDRNNASLILLGAIPAALLAIIFDLILRFMAKLSYKKLLMTLGVIVMIIILAIAIPMFAQKGDKITLAGKLGSEPSIITNMYKILIEEETKNTVEVKDGMGKTAFLFNALKSDDIDGYLEFTGTVLGELTKEPLKSKEEKKVYEQAKQSLEKKYQMTMLKPMKYNNTYALAVKRDFAKQHNIRTIGDLNKVKDQLKPGFTLEFNDRPDGYKAVQKAYNLNLDNIRTMEPKLRYQAINKGNINLIDAYSTDAELKQYDMVVLKDDKHVFPPYQGAPLFKESFLKKHPEIKKPLNKLENKISDEDMQMMNYKVTVKNEDPYTVAKDYLKAKGLIK</sequence>